<gene>
    <name evidence="1" type="primary">ybeY</name>
    <name type="ordered locus">HSM_0615</name>
</gene>
<reference key="1">
    <citation type="submission" date="2008-02" db="EMBL/GenBank/DDBJ databases">
        <title>Complete sequence of Haemophilus somnus 2336.</title>
        <authorList>
            <consortium name="US DOE Joint Genome Institute"/>
            <person name="Siddaramappa S."/>
            <person name="Duncan A.J."/>
            <person name="Challacombe J.F."/>
            <person name="Rainey D."/>
            <person name="Gillaspy A.F."/>
            <person name="Carson M."/>
            <person name="Gipson J."/>
            <person name="Gipson M."/>
            <person name="Bruce D."/>
            <person name="Detter J.C."/>
            <person name="Han C.S."/>
            <person name="Land M."/>
            <person name="Tapia R."/>
            <person name="Thompson L.S."/>
            <person name="Orvis J."/>
            <person name="Zaitshik J."/>
            <person name="Barnes G."/>
            <person name="Brettin T.S."/>
            <person name="Dyer D.W."/>
            <person name="Inzana T.J."/>
        </authorList>
    </citation>
    <scope>NUCLEOTIDE SEQUENCE [LARGE SCALE GENOMIC DNA]</scope>
    <source>
        <strain>2336</strain>
    </source>
</reference>
<organism>
    <name type="scientific">Histophilus somni (strain 2336)</name>
    <name type="common">Haemophilus somnus</name>
    <dbReference type="NCBI Taxonomy" id="228400"/>
    <lineage>
        <taxon>Bacteria</taxon>
        <taxon>Pseudomonadati</taxon>
        <taxon>Pseudomonadota</taxon>
        <taxon>Gammaproteobacteria</taxon>
        <taxon>Pasteurellales</taxon>
        <taxon>Pasteurellaceae</taxon>
        <taxon>Histophilus</taxon>
    </lineage>
</organism>
<feature type="chain" id="PRO_1000089180" description="Endoribonuclease YbeY">
    <location>
        <begin position="1"/>
        <end position="154"/>
    </location>
</feature>
<feature type="binding site" evidence="1">
    <location>
        <position position="114"/>
    </location>
    <ligand>
        <name>Zn(2+)</name>
        <dbReference type="ChEBI" id="CHEBI:29105"/>
        <note>catalytic</note>
    </ligand>
</feature>
<feature type="binding site" evidence="1">
    <location>
        <position position="118"/>
    </location>
    <ligand>
        <name>Zn(2+)</name>
        <dbReference type="ChEBI" id="CHEBI:29105"/>
        <note>catalytic</note>
    </ligand>
</feature>
<feature type="binding site" evidence="1">
    <location>
        <position position="124"/>
    </location>
    <ligand>
        <name>Zn(2+)</name>
        <dbReference type="ChEBI" id="CHEBI:29105"/>
        <note>catalytic</note>
    </ligand>
</feature>
<proteinExistence type="inferred from homology"/>
<comment type="function">
    <text evidence="1">Single strand-specific metallo-endoribonuclease involved in late-stage 70S ribosome quality control and in maturation of the 3' terminus of the 16S rRNA.</text>
</comment>
<comment type="cofactor">
    <cofactor evidence="1">
        <name>Zn(2+)</name>
        <dbReference type="ChEBI" id="CHEBI:29105"/>
    </cofactor>
    <text evidence="1">Binds 1 zinc ion.</text>
</comment>
<comment type="subcellular location">
    <subcellularLocation>
        <location evidence="1">Cytoplasm</location>
    </subcellularLocation>
</comment>
<comment type="similarity">
    <text evidence="1">Belongs to the endoribonuclease YbeY family.</text>
</comment>
<accession>B0US54</accession>
<dbReference type="EC" id="3.1.-.-" evidence="1"/>
<dbReference type="EMBL" id="CP000947">
    <property type="protein sequence ID" value="ACA32269.1"/>
    <property type="molecule type" value="Genomic_DNA"/>
</dbReference>
<dbReference type="RefSeq" id="WP_012341441.1">
    <property type="nucleotide sequence ID" value="NC_010519.1"/>
</dbReference>
<dbReference type="SMR" id="B0US54"/>
<dbReference type="STRING" id="228400.HSM_0615"/>
<dbReference type="GeneID" id="31486897"/>
<dbReference type="KEGG" id="hsm:HSM_0615"/>
<dbReference type="HOGENOM" id="CLU_106710_0_1_6"/>
<dbReference type="GO" id="GO:0005737">
    <property type="term" value="C:cytoplasm"/>
    <property type="evidence" value="ECO:0007669"/>
    <property type="project" value="UniProtKB-SubCell"/>
</dbReference>
<dbReference type="GO" id="GO:0004222">
    <property type="term" value="F:metalloendopeptidase activity"/>
    <property type="evidence" value="ECO:0007669"/>
    <property type="project" value="InterPro"/>
</dbReference>
<dbReference type="GO" id="GO:0004521">
    <property type="term" value="F:RNA endonuclease activity"/>
    <property type="evidence" value="ECO:0007669"/>
    <property type="project" value="UniProtKB-UniRule"/>
</dbReference>
<dbReference type="GO" id="GO:0008270">
    <property type="term" value="F:zinc ion binding"/>
    <property type="evidence" value="ECO:0007669"/>
    <property type="project" value="UniProtKB-UniRule"/>
</dbReference>
<dbReference type="GO" id="GO:0006364">
    <property type="term" value="P:rRNA processing"/>
    <property type="evidence" value="ECO:0007669"/>
    <property type="project" value="UniProtKB-UniRule"/>
</dbReference>
<dbReference type="Gene3D" id="3.40.390.30">
    <property type="entry name" value="Metalloproteases ('zincins'), catalytic domain"/>
    <property type="match status" value="1"/>
</dbReference>
<dbReference type="HAMAP" id="MF_00009">
    <property type="entry name" value="Endoribonucl_YbeY"/>
    <property type="match status" value="1"/>
</dbReference>
<dbReference type="InterPro" id="IPR023091">
    <property type="entry name" value="MetalPrtase_cat_dom_sf_prd"/>
</dbReference>
<dbReference type="InterPro" id="IPR002036">
    <property type="entry name" value="YbeY"/>
</dbReference>
<dbReference type="InterPro" id="IPR020549">
    <property type="entry name" value="YbeY_CS"/>
</dbReference>
<dbReference type="NCBIfam" id="TIGR00043">
    <property type="entry name" value="rRNA maturation RNase YbeY"/>
    <property type="match status" value="1"/>
</dbReference>
<dbReference type="PANTHER" id="PTHR46986">
    <property type="entry name" value="ENDORIBONUCLEASE YBEY, CHLOROPLASTIC"/>
    <property type="match status" value="1"/>
</dbReference>
<dbReference type="PANTHER" id="PTHR46986:SF1">
    <property type="entry name" value="ENDORIBONUCLEASE YBEY, CHLOROPLASTIC"/>
    <property type="match status" value="1"/>
</dbReference>
<dbReference type="Pfam" id="PF02130">
    <property type="entry name" value="YbeY"/>
    <property type="match status" value="1"/>
</dbReference>
<dbReference type="SUPFAM" id="SSF55486">
    <property type="entry name" value="Metalloproteases ('zincins'), catalytic domain"/>
    <property type="match status" value="1"/>
</dbReference>
<dbReference type="PROSITE" id="PS01306">
    <property type="entry name" value="UPF0054"/>
    <property type="match status" value="1"/>
</dbReference>
<protein>
    <recommendedName>
        <fullName evidence="1">Endoribonuclease YbeY</fullName>
        <ecNumber evidence="1">3.1.-.-</ecNumber>
    </recommendedName>
</protein>
<sequence>MKNVIIDLQIASEDATNLPSVEQIQLWANAAIRAENSQPEMTVRIVDEEESHHLNLTYRGKDKPTNVLSFPFECPDEIELPLIGDLVICRQVVEREATEQEKPLMAHWAHMIVHGSLHLLGYDHIEDDEAEEMERLETEIMLSLGFTDPYIIEK</sequence>
<name>YBEY_HISS2</name>
<keyword id="KW-0963">Cytoplasm</keyword>
<keyword id="KW-0255">Endonuclease</keyword>
<keyword id="KW-0378">Hydrolase</keyword>
<keyword id="KW-0479">Metal-binding</keyword>
<keyword id="KW-0540">Nuclease</keyword>
<keyword id="KW-0690">Ribosome biogenesis</keyword>
<keyword id="KW-0698">rRNA processing</keyword>
<keyword id="KW-0862">Zinc</keyword>
<evidence type="ECO:0000255" key="1">
    <source>
        <dbReference type="HAMAP-Rule" id="MF_00009"/>
    </source>
</evidence>